<proteinExistence type="evidence at protein level"/>
<sequence length="674" mass="75040">MKLNALSTATHGSRSSPVKLWKFSTSFLLAASIIVSGQSWAAETAKPATDATKAANDALLKELPFDDKTSFDLAHKGFIAPLPAEPIKGEKGNMIWDPSKYGFIKEGEAAPDTTNPSLWRQSQLINISGLFEVTDGIYQVRNYDLSNMTIVEGKDGITIFDPLISQETAKAALDLYYKHRPKKPVVAVIYTHSHVDHYGGVRGVVDEADVKAGKVKIYAPLGFLEHAVAENVMAGTAMSRRASYMYGNLLPPDAKGQLGAGLGTTTSAGTVTLIPPTDIIKETGETHVIDGLTYEFMYAPGSEAPAEMLYYIKEKKALNAAEDSTHTLHNTYSLRGAKIRDPLAWSKYLNEALKLWGDDVQVMYAMHHWPVWGNKEVREQLSLQRDMYRYINDETLRLANKGYTMTEIAEQVKLPKKIATKFSNRGYYGSLNHNVKATYVLYLGWFIGNPATLWELPPADKAKRYVEMMGGADAVLKKAKEYYDKGDFRWVAEVVNHVVFAEPNNQAAKNMQADALEQLGYQAESGPWRNFYLTGAQELRNGVQQLPTPDTASPDTVKAMDLDLFFDFLAMRLKGPDVADKHITLNLDFTDLKQKYTLEMVNGVLNHTEGMQAKNADATVTLTRETLNNVMLKQTTLKDAESSGDIKIEGDKGKLEELMSYMDNFDFWFNIVTP</sequence>
<reference key="1">
    <citation type="journal article" date="2011" name="Extremophiles">
        <title>Heterologous expression and characterization of a recombinant thermostable alkylsulfatase (sdsAP).</title>
        <authorList>
            <person name="Long M."/>
            <person name="Ruan L."/>
            <person name="Li F."/>
            <person name="Yu Z."/>
            <person name="Xu X."/>
        </authorList>
    </citation>
    <scope>NUCLEOTIDE SEQUENCE [GENOMIC DNA]</scope>
    <scope>FUNCTION</scope>
    <scope>CATALYTIC ACTIVITY</scope>
    <scope>COFACTOR</scope>
    <scope>ACTIVITY REGULATION</scope>
    <scope>BIOPHYSICOCHEMICAL PROPERTIES</scope>
    <scope>SUBUNIT</scope>
    <scope>BIOTECHNOLOGY</scope>
    <source>
        <strain>S9</strain>
    </source>
</reference>
<reference evidence="10" key="2">
    <citation type="journal article" date="2017" name="Biosci. Rep.">
        <title>Crystal structure of thermostable alkylsulfatase SdsAP from Pseudomonas sp. S9.</title>
        <authorList>
            <person name="Sun L."/>
            <person name="Chen P."/>
            <person name="Su Y."/>
            <person name="Cai Z."/>
            <person name="Ruan L."/>
            <person name="Xu X."/>
            <person name="Wu Y."/>
        </authorList>
    </citation>
    <scope>X-RAY CRYSTALLOGRAPHY (1.76 ANGSTROMS) OF 42-674 IN COMPLEX WITH ZINC</scope>
    <scope>FUNCTION</scope>
    <scope>CATALYTIC ACTIVITY</scope>
    <scope>COFACTOR</scope>
    <scope>BIOPHYSICOCHEMICAL PROPERTIES</scope>
    <scope>SUBUNIT</scope>
    <scope>DOMAIN</scope>
    <scope>MUTAGENESIS OF TYR-246 AND GLY-263</scope>
    <source>
        <strain>S9</strain>
    </source>
</reference>
<comment type="function">
    <text evidence="4 5">Alkylsulfatase that cleaves primary alkyl sulfates such as sodium octyl sulfate and the widely used detergent sodium dodecyl sulfate (SDS).</text>
</comment>
<comment type="catalytic activity">
    <reaction evidence="4 5">
        <text>a primary linear alkyl sulfate ester + H2O = a primary alcohol + sulfate + H(+)</text>
        <dbReference type="Rhea" id="RHEA:67908"/>
        <dbReference type="ChEBI" id="CHEBI:15377"/>
        <dbReference type="ChEBI" id="CHEBI:15378"/>
        <dbReference type="ChEBI" id="CHEBI:15734"/>
        <dbReference type="ChEBI" id="CHEBI:16189"/>
        <dbReference type="ChEBI" id="CHEBI:157685"/>
        <dbReference type="EC" id="3.1.6.21"/>
    </reaction>
</comment>
<comment type="cofactor">
    <cofactor evidence="4 5">
        <name>Zn(2+)</name>
        <dbReference type="ChEBI" id="CHEBI:29105"/>
    </cofactor>
    <text evidence="2">Binds 2 Zn(2+) ions per subunit.</text>
</comment>
<comment type="activity regulation">
    <text evidence="4">Inhibited by EDTA. Slightly activated in the presence of Ca(2+).</text>
</comment>
<comment type="biophysicochemical properties">
    <kinetics>
        <KM evidence="4">264.3 uM for SDS</KM>
        <KM evidence="5">74.2 uM for SDS</KM>
        <Vmax evidence="4">33.8 umol/min/mg enzyme</Vmax>
        <text evidence="5">kcat is 4.88 sec(-1) with SDS as substrate.</text>
    </kinetics>
    <phDependence>
        <text evidence="4">Optimum pH is 9.0.</text>
    </phDependence>
    <temperatureDependence>
        <text evidence="4">Optimum temperature is 70 degrees Celsius. Retains more than 90% activity after incubation at 65 degrees Celsius for 1 hour.</text>
    </temperatureDependence>
</comment>
<comment type="subunit">
    <text evidence="4 5">Homodimer.</text>
</comment>
<comment type="subcellular location">
    <subcellularLocation>
        <location evidence="2">Periplasm</location>
    </subcellularLocation>
</comment>
<comment type="domain">
    <text evidence="5">Contains three distinct domains: an N-terminal catalytic domain that contains a binuclear Zn(2+) cluster, a central dimerization domain and a C-terminal sterol carrier protein type 2 (SCP-2)-like fold domain.</text>
</comment>
<comment type="biotechnology">
    <text evidence="4">The thermal stability and higher specific activities make it an ideal candidate for the application in the biodegradation of SDS-containing waste water under elevated temperature conditions.</text>
</comment>
<comment type="similarity">
    <text evidence="8">Belongs to the metallo-beta-lactamase superfamily. Type III sulfatase family.</text>
</comment>
<feature type="signal peptide" evidence="3">
    <location>
        <begin position="1"/>
        <end position="41"/>
    </location>
</feature>
<feature type="chain" id="PRO_5003292034" description="Linear primary-alkylsulfatase">
    <location>
        <begin position="42"/>
        <end position="674"/>
    </location>
</feature>
<feature type="binding site" evidence="2">
    <location>
        <position position="192"/>
    </location>
    <ligand>
        <name>Zn(2+)</name>
        <dbReference type="ChEBI" id="CHEBI:29105"/>
        <label>1</label>
    </ligand>
</feature>
<feature type="binding site" evidence="2">
    <location>
        <position position="194"/>
    </location>
    <ligand>
        <name>Zn(2+)</name>
        <dbReference type="ChEBI" id="CHEBI:29105"/>
        <label>1</label>
    </ligand>
</feature>
<feature type="binding site" evidence="5 10">
    <location>
        <position position="196"/>
    </location>
    <ligand>
        <name>Zn(2+)</name>
        <dbReference type="ChEBI" id="CHEBI:29105"/>
        <label>2</label>
    </ligand>
</feature>
<feature type="binding site" evidence="5 10">
    <location>
        <position position="197"/>
    </location>
    <ligand>
        <name>Zn(2+)</name>
        <dbReference type="ChEBI" id="CHEBI:29105"/>
        <label>2</label>
    </ligand>
</feature>
<feature type="binding site" evidence="2">
    <location>
        <position position="303"/>
    </location>
    <ligand>
        <name>Zn(2+)</name>
        <dbReference type="ChEBI" id="CHEBI:29105"/>
        <label>1</label>
    </ligand>
</feature>
<feature type="binding site" evidence="2">
    <location>
        <position position="322"/>
    </location>
    <ligand>
        <name>Zn(2+)</name>
        <dbReference type="ChEBI" id="CHEBI:29105"/>
        <label>1</label>
    </ligand>
</feature>
<feature type="binding site" evidence="5 10">
    <location>
        <position position="322"/>
    </location>
    <ligand>
        <name>Zn(2+)</name>
        <dbReference type="ChEBI" id="CHEBI:29105"/>
        <label>2</label>
    </ligand>
</feature>
<feature type="binding site" evidence="1">
    <location>
        <begin position="330"/>
        <end position="335"/>
    </location>
    <ligand>
        <name>sulfate</name>
        <dbReference type="ChEBI" id="CHEBI:16189"/>
    </ligand>
</feature>
<feature type="binding site" evidence="1">
    <location>
        <position position="340"/>
    </location>
    <ligand>
        <name>sulfate</name>
        <dbReference type="ChEBI" id="CHEBI:16189"/>
    </ligand>
</feature>
<feature type="binding site" evidence="5 10">
    <location>
        <position position="367"/>
    </location>
    <ligand>
        <name>Zn(2+)</name>
        <dbReference type="ChEBI" id="CHEBI:29105"/>
        <label>2</label>
    </ligand>
</feature>
<feature type="binding site" evidence="1">
    <location>
        <position position="428"/>
    </location>
    <ligand>
        <name>sulfate</name>
        <dbReference type="ChEBI" id="CHEBI:16189"/>
    </ligand>
</feature>
<feature type="mutagenesis site" description="Loss of activity." evidence="5">
    <original>Y</original>
    <variation>A</variation>
    <variation>S</variation>
    <location>
        <position position="246"/>
    </location>
</feature>
<feature type="mutagenesis site" description="Loss of activity." evidence="5">
    <original>G</original>
    <variation>A</variation>
    <variation>F</variation>
    <location>
        <position position="263"/>
    </location>
</feature>
<feature type="helix" evidence="11">
    <location>
        <begin position="50"/>
        <end position="59"/>
    </location>
</feature>
<feature type="turn" evidence="11">
    <location>
        <begin position="60"/>
        <end position="62"/>
    </location>
</feature>
<feature type="helix" evidence="11">
    <location>
        <begin position="69"/>
        <end position="75"/>
    </location>
</feature>
<feature type="strand" evidence="11">
    <location>
        <begin position="78"/>
        <end position="80"/>
    </location>
</feature>
<feature type="strand" evidence="11">
    <location>
        <begin position="94"/>
        <end position="96"/>
    </location>
</feature>
<feature type="turn" evidence="11">
    <location>
        <begin position="98"/>
        <end position="103"/>
    </location>
</feature>
<feature type="helix" evidence="11">
    <location>
        <begin position="116"/>
        <end position="125"/>
    </location>
</feature>
<feature type="strand" evidence="11">
    <location>
        <begin position="129"/>
        <end position="134"/>
    </location>
</feature>
<feature type="strand" evidence="11">
    <location>
        <begin position="137"/>
        <end position="146"/>
    </location>
</feature>
<feature type="strand" evidence="11">
    <location>
        <begin position="148"/>
        <end position="152"/>
    </location>
</feature>
<feature type="strand" evidence="11">
    <location>
        <begin position="154"/>
        <end position="160"/>
    </location>
</feature>
<feature type="strand" evidence="11">
    <location>
        <begin position="163"/>
        <end position="165"/>
    </location>
</feature>
<feature type="helix" evidence="11">
    <location>
        <begin position="166"/>
        <end position="179"/>
    </location>
</feature>
<feature type="strand" evidence="11">
    <location>
        <begin position="185"/>
        <end position="189"/>
    </location>
</feature>
<feature type="strand" evidence="11">
    <location>
        <begin position="192"/>
        <end position="194"/>
    </location>
</feature>
<feature type="turn" evidence="11">
    <location>
        <begin position="198"/>
        <end position="200"/>
    </location>
</feature>
<feature type="helix" evidence="11">
    <location>
        <begin position="201"/>
        <end position="203"/>
    </location>
</feature>
<feature type="helix" evidence="11">
    <location>
        <begin position="207"/>
        <end position="211"/>
    </location>
</feature>
<feature type="strand" evidence="11">
    <location>
        <begin position="214"/>
        <end position="220"/>
    </location>
</feature>
<feature type="helix" evidence="11">
    <location>
        <begin position="223"/>
        <end position="232"/>
    </location>
</feature>
<feature type="helix" evidence="11">
    <location>
        <begin position="235"/>
        <end position="245"/>
    </location>
</feature>
<feature type="strand" evidence="11">
    <location>
        <begin position="261"/>
        <end position="264"/>
    </location>
</feature>
<feature type="strand" evidence="11">
    <location>
        <begin position="277"/>
        <end position="280"/>
    </location>
</feature>
<feature type="strand" evidence="11">
    <location>
        <begin position="286"/>
        <end position="289"/>
    </location>
</feature>
<feature type="strand" evidence="11">
    <location>
        <begin position="292"/>
        <end position="298"/>
    </location>
</feature>
<feature type="strand" evidence="11">
    <location>
        <begin position="302"/>
        <end position="312"/>
    </location>
</feature>
<feature type="turn" evidence="11">
    <location>
        <begin position="313"/>
        <end position="316"/>
    </location>
</feature>
<feature type="strand" evidence="11">
    <location>
        <begin position="317"/>
        <end position="319"/>
    </location>
</feature>
<feature type="turn" evidence="11">
    <location>
        <begin position="321"/>
        <end position="323"/>
    </location>
</feature>
<feature type="helix" evidence="11">
    <location>
        <begin position="342"/>
        <end position="356"/>
    </location>
</feature>
<feature type="turn" evidence="11">
    <location>
        <begin position="357"/>
        <end position="359"/>
    </location>
</feature>
<feature type="strand" evidence="11">
    <location>
        <begin position="362"/>
        <end position="364"/>
    </location>
</feature>
<feature type="strand" evidence="11">
    <location>
        <begin position="366"/>
        <end position="368"/>
    </location>
</feature>
<feature type="strand" evidence="11">
    <location>
        <begin position="371"/>
        <end position="373"/>
    </location>
</feature>
<feature type="helix" evidence="11">
    <location>
        <begin position="374"/>
        <end position="400"/>
    </location>
</feature>
<feature type="helix" evidence="11">
    <location>
        <begin position="405"/>
        <end position="411"/>
    </location>
</feature>
<feature type="helix" evidence="11">
    <location>
        <begin position="416"/>
        <end position="419"/>
    </location>
</feature>
<feature type="helix" evidence="11">
    <location>
        <begin position="422"/>
        <end position="424"/>
    </location>
</feature>
<feature type="strand" evidence="11">
    <location>
        <begin position="427"/>
        <end position="429"/>
    </location>
</feature>
<feature type="helix" evidence="11">
    <location>
        <begin position="431"/>
        <end position="443"/>
    </location>
</feature>
<feature type="helix" evidence="11">
    <location>
        <begin position="450"/>
        <end position="452"/>
    </location>
</feature>
<feature type="helix" evidence="11">
    <location>
        <begin position="458"/>
        <end position="468"/>
    </location>
</feature>
<feature type="helix" evidence="11">
    <location>
        <begin position="472"/>
        <end position="484"/>
    </location>
</feature>
<feature type="helix" evidence="11">
    <location>
        <begin position="488"/>
        <end position="501"/>
    </location>
</feature>
<feature type="helix" evidence="11">
    <location>
        <begin position="506"/>
        <end position="522"/>
    </location>
</feature>
<feature type="helix" evidence="11">
    <location>
        <begin position="526"/>
        <end position="541"/>
    </location>
</feature>
<feature type="helix" evidence="11">
    <location>
        <begin position="554"/>
        <end position="559"/>
    </location>
</feature>
<feature type="helix" evidence="11">
    <location>
        <begin position="562"/>
        <end position="572"/>
    </location>
</feature>
<feature type="helix" evidence="11">
    <location>
        <begin position="575"/>
        <end position="577"/>
    </location>
</feature>
<feature type="strand" evidence="11">
    <location>
        <begin position="583"/>
        <end position="589"/>
    </location>
</feature>
<feature type="turn" evidence="11">
    <location>
        <begin position="590"/>
        <end position="593"/>
    </location>
</feature>
<feature type="strand" evidence="11">
    <location>
        <begin position="594"/>
        <end position="601"/>
    </location>
</feature>
<feature type="strand" evidence="11">
    <location>
        <begin position="604"/>
        <end position="609"/>
    </location>
</feature>
<feature type="strand" evidence="11">
    <location>
        <begin position="617"/>
        <end position="622"/>
    </location>
</feature>
<feature type="helix" evidence="11">
    <location>
        <begin position="624"/>
        <end position="631"/>
    </location>
</feature>
<feature type="helix" evidence="11">
    <location>
        <begin position="637"/>
        <end position="642"/>
    </location>
</feature>
<feature type="strand" evidence="11">
    <location>
        <begin position="645"/>
        <end position="650"/>
    </location>
</feature>
<feature type="helix" evidence="11">
    <location>
        <begin position="654"/>
        <end position="660"/>
    </location>
</feature>
<name>LPAKS_PSESP</name>
<dbReference type="EC" id="3.1.6.21" evidence="4 5"/>
<dbReference type="EMBL" id="HQ189533">
    <property type="protein sequence ID" value="AEA06493.1"/>
    <property type="molecule type" value="Genomic_DNA"/>
</dbReference>
<dbReference type="PDB" id="4NUR">
    <property type="method" value="X-ray"/>
    <property type="resolution" value="1.76 A"/>
    <property type="chains" value="A/B=42-674"/>
</dbReference>
<dbReference type="PDBsum" id="4NUR"/>
<dbReference type="SMR" id="F2WP51"/>
<dbReference type="KEGG" id="ag:AEA06493"/>
<dbReference type="BRENDA" id="3.1.6.21">
    <property type="organism ID" value="17958"/>
</dbReference>
<dbReference type="EvolutionaryTrace" id="F2WP51"/>
<dbReference type="GO" id="GO:0042597">
    <property type="term" value="C:periplasmic space"/>
    <property type="evidence" value="ECO:0007669"/>
    <property type="project" value="UniProtKB-SubCell"/>
</dbReference>
<dbReference type="GO" id="GO:0018741">
    <property type="term" value="F:linear primary-alkylsulfatase activity"/>
    <property type="evidence" value="ECO:0007669"/>
    <property type="project" value="InterPro"/>
</dbReference>
<dbReference type="GO" id="GO:0046872">
    <property type="term" value="F:metal ion binding"/>
    <property type="evidence" value="ECO:0007669"/>
    <property type="project" value="UniProtKB-KW"/>
</dbReference>
<dbReference type="GO" id="GO:0046983">
    <property type="term" value="F:protein dimerization activity"/>
    <property type="evidence" value="ECO:0007669"/>
    <property type="project" value="InterPro"/>
</dbReference>
<dbReference type="GO" id="GO:0018909">
    <property type="term" value="P:dodecyl sulfate metabolic process"/>
    <property type="evidence" value="ECO:0007669"/>
    <property type="project" value="InterPro"/>
</dbReference>
<dbReference type="CDD" id="cd07710">
    <property type="entry name" value="arylsulfatase_Sdsa1-like_MBL-fold"/>
    <property type="match status" value="1"/>
</dbReference>
<dbReference type="FunFam" id="3.60.15.30:FF:000001">
    <property type="entry name" value="Alkyl/aryl-sulfatase BDS1"/>
    <property type="match status" value="1"/>
</dbReference>
<dbReference type="FunFam" id="1.25.40.880:FF:000001">
    <property type="entry name" value="SDS hydrolase SdsA1"/>
    <property type="match status" value="1"/>
</dbReference>
<dbReference type="Gene3D" id="1.25.40.880">
    <property type="entry name" value="Alkyl sulfatase, dimerisation domain"/>
    <property type="match status" value="1"/>
</dbReference>
<dbReference type="Gene3D" id="3.60.15.30">
    <property type="entry name" value="Metallo-beta-lactamase domain"/>
    <property type="match status" value="1"/>
</dbReference>
<dbReference type="Gene3D" id="3.30.1050.10">
    <property type="entry name" value="SCP2 sterol-binding domain"/>
    <property type="match status" value="1"/>
</dbReference>
<dbReference type="InterPro" id="IPR038536">
    <property type="entry name" value="Alkyl/aryl-sulf_dimr_sf"/>
</dbReference>
<dbReference type="InterPro" id="IPR029229">
    <property type="entry name" value="Alkyl_sulf_C"/>
</dbReference>
<dbReference type="InterPro" id="IPR029228">
    <property type="entry name" value="Alkyl_sulf_dimr"/>
</dbReference>
<dbReference type="InterPro" id="IPR052195">
    <property type="entry name" value="Bact_Alkyl/Aryl-Sulfatase"/>
</dbReference>
<dbReference type="InterPro" id="IPR044097">
    <property type="entry name" value="Bds1/SdsA1_MBL-fold"/>
</dbReference>
<dbReference type="InterPro" id="IPR001279">
    <property type="entry name" value="Metallo-B-lactamas"/>
</dbReference>
<dbReference type="InterPro" id="IPR036866">
    <property type="entry name" value="RibonucZ/Hydroxyglut_hydro"/>
</dbReference>
<dbReference type="InterPro" id="IPR036527">
    <property type="entry name" value="SCP2_sterol-bd_dom_sf"/>
</dbReference>
<dbReference type="PANTHER" id="PTHR43223">
    <property type="entry name" value="ALKYL/ARYL-SULFATASE"/>
    <property type="match status" value="1"/>
</dbReference>
<dbReference type="PANTHER" id="PTHR43223:SF1">
    <property type="entry name" value="ALKYL_ARYL-SULFATASE BDS1"/>
    <property type="match status" value="1"/>
</dbReference>
<dbReference type="Pfam" id="PF14864">
    <property type="entry name" value="Alkyl_sulf_C"/>
    <property type="match status" value="1"/>
</dbReference>
<dbReference type="Pfam" id="PF14863">
    <property type="entry name" value="Alkyl_sulf_dimr"/>
    <property type="match status" value="1"/>
</dbReference>
<dbReference type="Pfam" id="PF00753">
    <property type="entry name" value="Lactamase_B"/>
    <property type="match status" value="1"/>
</dbReference>
<dbReference type="SMART" id="SM00849">
    <property type="entry name" value="Lactamase_B"/>
    <property type="match status" value="1"/>
</dbReference>
<dbReference type="SUPFAM" id="SSF56281">
    <property type="entry name" value="Metallo-hydrolase/oxidoreductase"/>
    <property type="match status" value="1"/>
</dbReference>
<dbReference type="SUPFAM" id="SSF55718">
    <property type="entry name" value="SCP-like"/>
    <property type="match status" value="1"/>
</dbReference>
<gene>
    <name evidence="6" type="primary">sdsAP</name>
    <name evidence="9" type="synonym">psdsA</name>
</gene>
<accession>F2WP51</accession>
<evidence type="ECO:0000250" key="1">
    <source>
        <dbReference type="UniProtKB" id="P32717"/>
    </source>
</evidence>
<evidence type="ECO:0000250" key="2">
    <source>
        <dbReference type="UniProtKB" id="Q9I5I9"/>
    </source>
</evidence>
<evidence type="ECO:0000255" key="3"/>
<evidence type="ECO:0000269" key="4">
    <source>
    </source>
</evidence>
<evidence type="ECO:0000269" key="5">
    <source>
    </source>
</evidence>
<evidence type="ECO:0000303" key="6">
    <source>
    </source>
</evidence>
<evidence type="ECO:0000303" key="7">
    <source>
    </source>
</evidence>
<evidence type="ECO:0000305" key="8"/>
<evidence type="ECO:0000312" key="9">
    <source>
        <dbReference type="EMBL" id="AEA06493.1"/>
    </source>
</evidence>
<evidence type="ECO:0007744" key="10">
    <source>
        <dbReference type="PDB" id="4NUR"/>
    </source>
</evidence>
<evidence type="ECO:0007829" key="11">
    <source>
        <dbReference type="PDB" id="4NUR"/>
    </source>
</evidence>
<organism>
    <name type="scientific">Pseudomonas sp</name>
    <dbReference type="NCBI Taxonomy" id="306"/>
    <lineage>
        <taxon>Bacteria</taxon>
        <taxon>Pseudomonadati</taxon>
        <taxon>Pseudomonadota</taxon>
        <taxon>Gammaproteobacteria</taxon>
        <taxon>Pseudomonadales</taxon>
        <taxon>Pseudomonadaceae</taxon>
        <taxon>Pseudomonas</taxon>
    </lineage>
</organism>
<keyword id="KW-0002">3D-structure</keyword>
<keyword id="KW-0378">Hydrolase</keyword>
<keyword id="KW-0479">Metal-binding</keyword>
<keyword id="KW-0574">Periplasm</keyword>
<keyword id="KW-0732">Signal</keyword>
<keyword id="KW-0862">Zinc</keyword>
<protein>
    <recommendedName>
        <fullName evidence="8">Linear primary-alkylsulfatase</fullName>
        <ecNumber evidence="4 5">3.1.6.21</ecNumber>
    </recommendedName>
    <alternativeName>
        <fullName evidence="7">Primary type-III alkylsulfatase</fullName>
    </alternativeName>
    <alternativeName>
        <fullName evidence="8">Type III linear primary-alkylsulfatase</fullName>
    </alternativeName>
</protein>